<evidence type="ECO:0000250" key="1"/>
<evidence type="ECO:0000255" key="2">
    <source>
        <dbReference type="PROSITE-ProRule" id="PRU00037"/>
    </source>
</evidence>
<sequence length="547" mass="63734">MDIKNDIRNISNLLDDDILCDVIITIGDGEEIKAHKTILAAGSTYFKTMFTTPMIARDLVTRVNLQMFDKDVVKNIVQYLYNRHISSMNVIDVLKCADYLLINDLVTNCESYIKDYINHDIYHKLYEMVHIPIVKYIKRMLISNIPTLITTNAFKKTVFEILFDIISTNDSVYLYREGYKVTILLKWLEYNYITEEQLLCILSCIDIQNLDKKSRLLLYSNKTINMHPSCIQFLLDNKQNRNIIPHQLCLACHDTNYNVCNPCIVVYNINTMEYSVISTIPNHIINYASAIVDNDIIIARGYNFNNPSLNKVYKINIENKIHVELPPIIKNRCRFSLAVIDDTIYAIGGQNGTNVERTIECYTMGDDKWKMLPNMPIALSSYGMCVLDQYIYIIGGRTQHIDYTSVHTVNSIDMEEDTNISNKVMRYDTVNNIWETLPNFWTGTINPGVVSHKDDIYVVCDIKDEKNVKTCIFRYNTNTYNGWELVTTTESRLSALHTILYNNTIMMLHCYESYMLQDTFNVYTREWNHMCHQHSNSYIMYNILPIY</sequence>
<comment type="function">
    <text>Probable substrate-specific adapter of CUL3-containing E3 ubiquitin-protein ligases which mediate the ubiquitination and subsequent proteasomal degradation of host target proteins.</text>
</comment>
<comment type="subunit">
    <text evidence="1">Interacts (via BTB domain) with host CUL3.</text>
</comment>
<comment type="subcellular location">
    <subcellularLocation>
        <location evidence="1">Host cytoplasm</location>
    </subcellularLocation>
</comment>
<comment type="domain">
    <text evidence="1">The BTB domain is responsible for the interaction with CUL3 while the Kelch repeat domains supposely serve to recruit the cellular substrates.</text>
</comment>
<accession>Q0GNN1</accession>
<gene>
    <name type="primary">KBTB2</name>
    <name type="ordered locus">HSPV197</name>
</gene>
<organismHost>
    <name type="scientific">Bos taurus</name>
    <name type="common">Bovine</name>
    <dbReference type="NCBI Taxonomy" id="9913"/>
</organismHost>
<organismHost>
    <name type="scientific">Equus caballus</name>
    <name type="common">Horse</name>
    <dbReference type="NCBI Taxonomy" id="9796"/>
</organismHost>
<organismHost>
    <name type="scientific">Homo sapiens</name>
    <name type="common">Human</name>
    <dbReference type="NCBI Taxonomy" id="9606"/>
</organismHost>
<keyword id="KW-1035">Host cytoplasm</keyword>
<keyword id="KW-0945">Host-virus interaction</keyword>
<keyword id="KW-0880">Kelch repeat</keyword>
<keyword id="KW-1123">Modulation of host E3 ubiquitin ligases by virus</keyword>
<keyword id="KW-1130">Modulation of host ubiquitin pathway by virus</keyword>
<keyword id="KW-0677">Repeat</keyword>
<keyword id="KW-0833">Ubl conjugation pathway</keyword>
<organism>
    <name type="scientific">Horsepox virus</name>
    <name type="common">HSPV</name>
    <dbReference type="NCBI Taxonomy" id="397342"/>
    <lineage>
        <taxon>Viruses</taxon>
        <taxon>Varidnaviria</taxon>
        <taxon>Bamfordvirae</taxon>
        <taxon>Nucleocytoviricota</taxon>
        <taxon>Pokkesviricetes</taxon>
        <taxon>Chitovirales</taxon>
        <taxon>Poxviridae</taxon>
        <taxon>Chordopoxvirinae</taxon>
        <taxon>Orthopoxvirus</taxon>
        <taxon>Vaccinia virus</taxon>
    </lineage>
</organism>
<name>KBTB2_HSPV</name>
<reference key="1">
    <citation type="journal article" date="2006" name="J. Virol.">
        <title>Genome of horsepox virus.</title>
        <authorList>
            <person name="Tulman E.R."/>
            <person name="Delhon G."/>
            <person name="Afonso C.L."/>
            <person name="Lu Z."/>
            <person name="Zsak L."/>
            <person name="Sandybaev N.T."/>
            <person name="Kerembekova U.Z."/>
            <person name="Zaitsev V.L."/>
            <person name="Kutish G.F."/>
            <person name="Rock D.L."/>
        </authorList>
    </citation>
    <scope>NUCLEOTIDE SEQUENCE [LARGE SCALE GENOMIC DNA]</scope>
    <source>
        <strain>MNR-76</strain>
    </source>
</reference>
<feature type="chain" id="PRO_0000396130" description="Kelch repeat and BTB domain-containing protein 2">
    <location>
        <begin position="1"/>
        <end position="547"/>
    </location>
</feature>
<feature type="domain" description="BTB" evidence="2">
    <location>
        <begin position="20"/>
        <end position="89"/>
    </location>
</feature>
<feature type="repeat" description="Kelch 1">
    <location>
        <begin position="295"/>
        <end position="342"/>
    </location>
</feature>
<feature type="repeat" description="Kelch 2">
    <location>
        <begin position="343"/>
        <end position="389"/>
    </location>
</feature>
<feature type="repeat" description="Kelch 3">
    <location>
        <begin position="391"/>
        <end position="454"/>
    </location>
</feature>
<dbReference type="EMBL" id="DQ792504">
    <property type="protein sequence ID" value="ABH08310.1"/>
    <property type="molecule type" value="Genomic_DNA"/>
</dbReference>
<dbReference type="SMR" id="Q0GNN1"/>
<dbReference type="Proteomes" id="UP000111173">
    <property type="component" value="Genome"/>
</dbReference>
<dbReference type="GO" id="GO:0030430">
    <property type="term" value="C:host cell cytoplasm"/>
    <property type="evidence" value="ECO:0007669"/>
    <property type="project" value="UniProtKB-SubCell"/>
</dbReference>
<dbReference type="GO" id="GO:0039648">
    <property type="term" value="P:symbiont-mediated perturbation of host ubiquitin-like protein modification"/>
    <property type="evidence" value="ECO:0007669"/>
    <property type="project" value="UniProtKB-KW"/>
</dbReference>
<dbReference type="CDD" id="cd18186">
    <property type="entry name" value="BTB_POZ_ZBTB_KLHL-like"/>
    <property type="match status" value="1"/>
</dbReference>
<dbReference type="Gene3D" id="2.120.10.80">
    <property type="entry name" value="Kelch-type beta propeller"/>
    <property type="match status" value="1"/>
</dbReference>
<dbReference type="Gene3D" id="3.30.710.10">
    <property type="entry name" value="Potassium Channel Kv1.1, Chain A"/>
    <property type="match status" value="1"/>
</dbReference>
<dbReference type="InterPro" id="IPR000210">
    <property type="entry name" value="BTB/POZ_dom"/>
</dbReference>
<dbReference type="InterPro" id="IPR015915">
    <property type="entry name" value="Kelch-typ_b-propeller"/>
</dbReference>
<dbReference type="InterPro" id="IPR006652">
    <property type="entry name" value="Kelch_1"/>
</dbReference>
<dbReference type="InterPro" id="IPR011333">
    <property type="entry name" value="SKP1/BTB/POZ_sf"/>
</dbReference>
<dbReference type="PANTHER" id="PTHR45632:SF3">
    <property type="entry name" value="KELCH-LIKE PROTEIN 32"/>
    <property type="match status" value="1"/>
</dbReference>
<dbReference type="PANTHER" id="PTHR45632">
    <property type="entry name" value="LD33804P"/>
    <property type="match status" value="1"/>
</dbReference>
<dbReference type="Pfam" id="PF00651">
    <property type="entry name" value="BTB"/>
    <property type="match status" value="1"/>
</dbReference>
<dbReference type="Pfam" id="PF01344">
    <property type="entry name" value="Kelch_1"/>
    <property type="match status" value="3"/>
</dbReference>
<dbReference type="SMART" id="SM00225">
    <property type="entry name" value="BTB"/>
    <property type="match status" value="1"/>
</dbReference>
<dbReference type="SMART" id="SM00612">
    <property type="entry name" value="Kelch"/>
    <property type="match status" value="3"/>
</dbReference>
<dbReference type="SUPFAM" id="SSF117281">
    <property type="entry name" value="Kelch motif"/>
    <property type="match status" value="1"/>
</dbReference>
<dbReference type="SUPFAM" id="SSF54695">
    <property type="entry name" value="POZ domain"/>
    <property type="match status" value="1"/>
</dbReference>
<dbReference type="PROSITE" id="PS50097">
    <property type="entry name" value="BTB"/>
    <property type="match status" value="1"/>
</dbReference>
<proteinExistence type="inferred from homology"/>
<protein>
    <recommendedName>
        <fullName>Kelch repeat and BTB domain-containing protein 2</fullName>
    </recommendedName>
</protein>